<proteinExistence type="evidence at protein level"/>
<gene>
    <name type="primary">camB</name>
</gene>
<protein>
    <recommendedName>
        <fullName>Putidaredoxin</fullName>
        <shortName>PDX</shortName>
    </recommendedName>
</protein>
<organism>
    <name type="scientific">Pseudomonas putida</name>
    <name type="common">Arthrobacter siderocapsulatus</name>
    <dbReference type="NCBI Taxonomy" id="303"/>
    <lineage>
        <taxon>Bacteria</taxon>
        <taxon>Pseudomonadati</taxon>
        <taxon>Pseudomonadota</taxon>
        <taxon>Gammaproteobacteria</taxon>
        <taxon>Pseudomonadales</taxon>
        <taxon>Pseudomonadaceae</taxon>
        <taxon>Pseudomonas</taxon>
    </lineage>
</organism>
<comment type="function">
    <text>The oxidation of camphor by cytochrome P450-CAM requires the participation of a flavoprotein, putidaredoxin reductase, and an iron-sulfur protein, putidaredoxin, to mediate the transfer of electrons from NADH to P450 for oxygen activation.</text>
</comment>
<comment type="cofactor">
    <cofactor>
        <name>[2Fe-2S] cluster</name>
        <dbReference type="ChEBI" id="CHEBI:190135"/>
    </cofactor>
    <text>Binds 1 [2Fe-2S] cluster.</text>
</comment>
<comment type="subunit">
    <text>Monomer.</text>
</comment>
<comment type="interaction">
    <interactant intactId="EBI-15706395">
        <id>P00259</id>
    </interactant>
    <interactant intactId="EBI-15706256">
        <id>P00183</id>
        <label>camC</label>
    </interactant>
    <organismsDiffer>false</organismsDiffer>
    <experiments>3</experiments>
</comment>
<comment type="similarity">
    <text evidence="4">Belongs to the adrenodoxin/putidaredoxin family.</text>
</comment>
<dbReference type="EMBL" id="J05406">
    <property type="protein sequence ID" value="AAA25759.1"/>
    <property type="molecule type" value="Genomic_DNA"/>
</dbReference>
<dbReference type="EMBL" id="D00528">
    <property type="protein sequence ID" value="BAA00414.1"/>
    <property type="molecule type" value="Genomic_DNA"/>
</dbReference>
<dbReference type="PIR" id="JX0079">
    <property type="entry name" value="PXPSEP"/>
</dbReference>
<dbReference type="PDB" id="1GPX">
    <property type="method" value="NMR"/>
    <property type="chains" value="A=2-107"/>
</dbReference>
<dbReference type="PDB" id="1OQQ">
    <property type="method" value="X-ray"/>
    <property type="resolution" value="1.47 A"/>
    <property type="chains" value="A/B=2-107"/>
</dbReference>
<dbReference type="PDB" id="1OQR">
    <property type="method" value="X-ray"/>
    <property type="resolution" value="1.65 A"/>
    <property type="chains" value="A/B/C=2-107"/>
</dbReference>
<dbReference type="PDB" id="1PDX">
    <property type="method" value="NMR"/>
    <property type="chains" value="A=2-107"/>
</dbReference>
<dbReference type="PDB" id="1PUT">
    <property type="method" value="NMR"/>
    <property type="chains" value="A=2-107"/>
</dbReference>
<dbReference type="PDB" id="1R7S">
    <property type="method" value="X-ray"/>
    <property type="resolution" value="1.91 A"/>
    <property type="chains" value="A/B/C=2-107"/>
</dbReference>
<dbReference type="PDB" id="1XLN">
    <property type="method" value="X-ray"/>
    <property type="resolution" value="2.03 A"/>
    <property type="chains" value="A/B=2-107"/>
</dbReference>
<dbReference type="PDB" id="1XLO">
    <property type="method" value="X-ray"/>
    <property type="resolution" value="1.84 A"/>
    <property type="chains" value="A/B=2-107"/>
</dbReference>
<dbReference type="PDB" id="1XLP">
    <property type="method" value="X-ray"/>
    <property type="resolution" value="2.00 A"/>
    <property type="chains" value="A/B/C=2-107"/>
</dbReference>
<dbReference type="PDB" id="1XLQ">
    <property type="method" value="X-ray"/>
    <property type="resolution" value="1.45 A"/>
    <property type="chains" value="A/B/C=2-107"/>
</dbReference>
<dbReference type="PDB" id="1YJI">
    <property type="method" value="NMR"/>
    <property type="chains" value="A=2-107"/>
</dbReference>
<dbReference type="PDB" id="1YJJ">
    <property type="method" value="NMR"/>
    <property type="chains" value="A=2-107"/>
</dbReference>
<dbReference type="PDB" id="2M56">
    <property type="method" value="NMR"/>
    <property type="chains" value="B=2-107"/>
</dbReference>
<dbReference type="PDB" id="3LB8">
    <property type="method" value="X-ray"/>
    <property type="resolution" value="2.60 A"/>
    <property type="chains" value="C/D=2-107"/>
</dbReference>
<dbReference type="PDB" id="3W9C">
    <property type="method" value="X-ray"/>
    <property type="resolution" value="2.50 A"/>
    <property type="chains" value="B=2-107"/>
</dbReference>
<dbReference type="PDB" id="4JWS">
    <property type="method" value="X-ray"/>
    <property type="resolution" value="2.15 A"/>
    <property type="chains" value="C/D=2-107"/>
</dbReference>
<dbReference type="PDB" id="4JWU">
    <property type="method" value="X-ray"/>
    <property type="resolution" value="2.20 A"/>
    <property type="chains" value="C/D=1-107"/>
</dbReference>
<dbReference type="PDB" id="4JX1">
    <property type="method" value="X-ray"/>
    <property type="resolution" value="2.09 A"/>
    <property type="chains" value="C/D/G/H=1-107"/>
</dbReference>
<dbReference type="PDB" id="5GXG">
    <property type="method" value="X-ray"/>
    <property type="resolution" value="1.70 A"/>
    <property type="chains" value="B=2-107"/>
</dbReference>
<dbReference type="PDB" id="6NBL">
    <property type="method" value="X-ray"/>
    <property type="resolution" value="2.15 A"/>
    <property type="chains" value="C/D=2-107"/>
</dbReference>
<dbReference type="PDBsum" id="1GPX"/>
<dbReference type="PDBsum" id="1OQQ"/>
<dbReference type="PDBsum" id="1OQR"/>
<dbReference type="PDBsum" id="1PDX"/>
<dbReference type="PDBsum" id="1PUT"/>
<dbReference type="PDBsum" id="1R7S"/>
<dbReference type="PDBsum" id="1XLN"/>
<dbReference type="PDBsum" id="1XLO"/>
<dbReference type="PDBsum" id="1XLP"/>
<dbReference type="PDBsum" id="1XLQ"/>
<dbReference type="PDBsum" id="1YJI"/>
<dbReference type="PDBsum" id="1YJJ"/>
<dbReference type="PDBsum" id="2M56"/>
<dbReference type="PDBsum" id="3LB8"/>
<dbReference type="PDBsum" id="3W9C"/>
<dbReference type="PDBsum" id="4JWS"/>
<dbReference type="PDBsum" id="4JWU"/>
<dbReference type="PDBsum" id="4JX1"/>
<dbReference type="PDBsum" id="5GXG"/>
<dbReference type="PDBsum" id="6NBL"/>
<dbReference type="BMRB" id="P00259"/>
<dbReference type="SMR" id="P00259"/>
<dbReference type="DIP" id="DIP-29810N"/>
<dbReference type="IntAct" id="P00259">
    <property type="interactions" value="1"/>
</dbReference>
<dbReference type="BioCyc" id="MetaCyc:MONOMER-3502"/>
<dbReference type="EvolutionaryTrace" id="P00259"/>
<dbReference type="GO" id="GO:0005829">
    <property type="term" value="C:cytosol"/>
    <property type="evidence" value="ECO:0007669"/>
    <property type="project" value="TreeGrafter"/>
</dbReference>
<dbReference type="GO" id="GO:0051537">
    <property type="term" value="F:2 iron, 2 sulfur cluster binding"/>
    <property type="evidence" value="ECO:0007669"/>
    <property type="project" value="UniProtKB-KW"/>
</dbReference>
<dbReference type="GO" id="GO:0009055">
    <property type="term" value="F:electron transfer activity"/>
    <property type="evidence" value="ECO:0007669"/>
    <property type="project" value="TreeGrafter"/>
</dbReference>
<dbReference type="GO" id="GO:0046872">
    <property type="term" value="F:metal ion binding"/>
    <property type="evidence" value="ECO:0007669"/>
    <property type="project" value="UniProtKB-KW"/>
</dbReference>
<dbReference type="GO" id="GO:0140647">
    <property type="term" value="P:P450-containing electron transport chain"/>
    <property type="evidence" value="ECO:0007669"/>
    <property type="project" value="InterPro"/>
</dbReference>
<dbReference type="CDD" id="cd00207">
    <property type="entry name" value="fer2"/>
    <property type="match status" value="1"/>
</dbReference>
<dbReference type="Gene3D" id="3.10.20.30">
    <property type="match status" value="1"/>
</dbReference>
<dbReference type="InterPro" id="IPR036010">
    <property type="entry name" value="2Fe-2S_ferredoxin-like_sf"/>
</dbReference>
<dbReference type="InterPro" id="IPR001041">
    <property type="entry name" value="2Fe-2S_ferredoxin-type"/>
</dbReference>
<dbReference type="InterPro" id="IPR001055">
    <property type="entry name" value="Adrenodoxin-like"/>
</dbReference>
<dbReference type="InterPro" id="IPR018298">
    <property type="entry name" value="Adrenodoxin_Fe-S_BS"/>
</dbReference>
<dbReference type="InterPro" id="IPR012675">
    <property type="entry name" value="Beta-grasp_dom_sf"/>
</dbReference>
<dbReference type="PANTHER" id="PTHR23426:SF65">
    <property type="entry name" value="FERREDOXIN-2, MITOCHONDRIAL"/>
    <property type="match status" value="1"/>
</dbReference>
<dbReference type="PANTHER" id="PTHR23426">
    <property type="entry name" value="FERREDOXIN/ADRENODOXIN"/>
    <property type="match status" value="1"/>
</dbReference>
<dbReference type="Pfam" id="PF00111">
    <property type="entry name" value="Fer2"/>
    <property type="match status" value="1"/>
</dbReference>
<dbReference type="PRINTS" id="PR00355">
    <property type="entry name" value="ADRENODOXIN"/>
</dbReference>
<dbReference type="SUPFAM" id="SSF54292">
    <property type="entry name" value="2Fe-2S ferredoxin-like"/>
    <property type="match status" value="1"/>
</dbReference>
<dbReference type="PROSITE" id="PS51085">
    <property type="entry name" value="2FE2S_FER_2"/>
    <property type="match status" value="1"/>
</dbReference>
<dbReference type="PROSITE" id="PS00814">
    <property type="entry name" value="ADX"/>
    <property type="match status" value="1"/>
</dbReference>
<feature type="initiator methionine" description="Removed" evidence="2">
    <location>
        <position position="1"/>
    </location>
</feature>
<feature type="chain" id="PRO_0000201162" description="Putidaredoxin">
    <location>
        <begin position="2"/>
        <end position="107"/>
    </location>
</feature>
<feature type="domain" description="2Fe-2S ferredoxin-type" evidence="1">
    <location>
        <begin position="2"/>
        <end position="106"/>
    </location>
</feature>
<feature type="binding site" evidence="1 3">
    <location>
        <position position="40"/>
    </location>
    <ligand>
        <name>[2Fe-2S] cluster</name>
        <dbReference type="ChEBI" id="CHEBI:190135"/>
    </ligand>
</feature>
<feature type="binding site" evidence="1 3">
    <location>
        <position position="46"/>
    </location>
    <ligand>
        <name>[2Fe-2S] cluster</name>
        <dbReference type="ChEBI" id="CHEBI:190135"/>
    </ligand>
</feature>
<feature type="binding site" evidence="1 3">
    <location>
        <position position="49"/>
    </location>
    <ligand>
        <name>[2Fe-2S] cluster</name>
        <dbReference type="ChEBI" id="CHEBI:190135"/>
    </ligand>
</feature>
<feature type="binding site" evidence="1 3">
    <location>
        <position position="87"/>
    </location>
    <ligand>
        <name>[2Fe-2S] cluster</name>
        <dbReference type="ChEBI" id="CHEBI:190135"/>
    </ligand>
</feature>
<feature type="sequence conflict" description="In Ref. 3; AA sequence." evidence="4" ref="3">
    <original>E</original>
    <variation>Q</variation>
    <location>
        <position position="15"/>
    </location>
</feature>
<feature type="strand" evidence="8">
    <location>
        <begin position="3"/>
        <end position="7"/>
    </location>
</feature>
<feature type="helix" evidence="9">
    <location>
        <begin position="9"/>
        <end position="11"/>
    </location>
</feature>
<feature type="strand" evidence="8">
    <location>
        <begin position="13"/>
        <end position="17"/>
    </location>
</feature>
<feature type="strand" evidence="9">
    <location>
        <begin position="20"/>
        <end position="23"/>
    </location>
</feature>
<feature type="helix" evidence="8">
    <location>
        <begin position="24"/>
        <end position="30"/>
    </location>
</feature>
<feature type="helix" evidence="7">
    <location>
        <begin position="34"/>
        <end position="36"/>
    </location>
</feature>
<feature type="strand" evidence="5">
    <location>
        <begin position="38"/>
        <end position="40"/>
    </location>
</feature>
<feature type="strand" evidence="8">
    <location>
        <begin position="42"/>
        <end position="46"/>
    </location>
</feature>
<feature type="strand" evidence="8">
    <location>
        <begin position="50"/>
        <end position="53"/>
    </location>
</feature>
<feature type="turn" evidence="8">
    <location>
        <begin position="55"/>
        <end position="57"/>
    </location>
</feature>
<feature type="helix" evidence="8">
    <location>
        <begin position="58"/>
        <end position="60"/>
    </location>
</feature>
<feature type="helix" evidence="8">
    <location>
        <begin position="66"/>
        <end position="72"/>
    </location>
</feature>
<feature type="strand" evidence="6">
    <location>
        <begin position="74"/>
        <end position="77"/>
    </location>
</feature>
<feature type="strand" evidence="8">
    <location>
        <begin position="83"/>
        <end position="85"/>
    </location>
</feature>
<feature type="helix" evidence="8">
    <location>
        <begin position="86"/>
        <end position="88"/>
    </location>
</feature>
<feature type="helix" evidence="8">
    <location>
        <begin position="93"/>
        <end position="95"/>
    </location>
</feature>
<feature type="strand" evidence="8">
    <location>
        <begin position="98"/>
        <end position="101"/>
    </location>
</feature>
<name>PUTX_PSEPU</name>
<evidence type="ECO:0000255" key="1">
    <source>
        <dbReference type="PROSITE-ProRule" id="PRU00465"/>
    </source>
</evidence>
<evidence type="ECO:0000269" key="2">
    <source>
    </source>
</evidence>
<evidence type="ECO:0000269" key="3">
    <source>
    </source>
</evidence>
<evidence type="ECO:0000305" key="4"/>
<evidence type="ECO:0007829" key="5">
    <source>
        <dbReference type="PDB" id="1GPX"/>
    </source>
</evidence>
<evidence type="ECO:0007829" key="6">
    <source>
        <dbReference type="PDB" id="1PUT"/>
    </source>
</evidence>
<evidence type="ECO:0007829" key="7">
    <source>
        <dbReference type="PDB" id="1XLN"/>
    </source>
</evidence>
<evidence type="ECO:0007829" key="8">
    <source>
        <dbReference type="PDB" id="1XLQ"/>
    </source>
</evidence>
<evidence type="ECO:0007829" key="9">
    <source>
        <dbReference type="PDB" id="3LB8"/>
    </source>
</evidence>
<reference key="1">
    <citation type="journal article" date="1990" name="J. Biol. Chem.">
        <title>Putidaredoxin reductase and putidaredoxin. Cloning, sequence determination, and heterologous expression of the proteins.</title>
        <authorList>
            <person name="Peterson J.A."/>
            <person name="Lorence M.C."/>
            <person name="Amarneh B."/>
        </authorList>
    </citation>
    <scope>NUCLEOTIDE SEQUENCE [GENOMIC DNA]</scope>
</reference>
<reference key="2">
    <citation type="journal article" date="1989" name="J. Biochem.">
        <title>Cloning and nucleotide sequences of NADH-putidaredoxin reductase gene (camA) and putidaredoxin gene (camB) involved in cytochrome P-450cam hydroxylase of Pseudomonas putida.</title>
        <authorList>
            <person name="Koga H."/>
            <person name="Yamaguchi E."/>
            <person name="Matsunaga K."/>
            <person name="Aramaki H."/>
            <person name="Horiuchi T."/>
        </authorList>
    </citation>
    <scope>NUCLEOTIDE SEQUENCE [GENOMIC DNA]</scope>
    <source>
        <strain>G1 / ATCC 17453</strain>
    </source>
</reference>
<reference key="3">
    <citation type="journal article" date="1974" name="J. Biol. Chem.">
        <title>The amino acid sequence of putidaredoxin, an iron-sulfur protein from Pseudomonas putida.</title>
        <authorList>
            <person name="Tanaka M."/>
            <person name="Haniu M."/>
            <person name="Yasunobu K.T."/>
            <person name="Dus K."/>
            <person name="Gunsalus I.C."/>
        </authorList>
    </citation>
    <scope>PROTEIN SEQUENCE OF 2-107</scope>
</reference>
<reference key="4">
    <citation type="journal article" date="2001" name="Biochemistry">
        <title>Laser flash induced electron transfer in P450cam monooxygenase: putidaredoxin reductase-putidaredoxin interaction.</title>
        <authorList>
            <person name="Sevrioukova I.F."/>
            <person name="Hazzard J.T."/>
            <person name="Tollin G."/>
            <person name="Poulos T.L."/>
        </authorList>
    </citation>
    <scope>INTERACTION WITH PUTIDAREDOXIN REDUCTASE</scope>
</reference>
<reference key="5">
    <citation type="journal article" date="2005" name="J. Biol. Chem.">
        <title>The putidaredoxin reductase-putidaredoxin electron transfer complex: theoretical and experimental studies.</title>
        <authorList>
            <person name="Kuznetsov V.Y."/>
            <person name="Blair E."/>
            <person name="Farmer P.J."/>
            <person name="Poulos T.L."/>
            <person name="Pifferitti A."/>
            <person name="Sevrioukova I.F."/>
        </authorList>
    </citation>
    <scope>INTERACTION WITH PUTIDAREDOXIN REDUCTASE</scope>
</reference>
<reference key="6">
    <citation type="journal article" date="2003" name="J. Mol. Biol.">
        <title>Crystal structure of putidaredoxin, the [2Fe-2S] component of the P450cam monooxygenase system from Pseudomonas putida.</title>
        <authorList>
            <person name="Sevrioukova I.F."/>
            <person name="Garcia C."/>
            <person name="Li H."/>
            <person name="Bhaskar B."/>
            <person name="Poulos T.L."/>
        </authorList>
    </citation>
    <scope>X-RAY CRYSTALLOGRAPHY (1.47 ANGSTROMS) OF MUTANTS</scope>
</reference>
<reference key="7">
    <citation type="journal article" date="2004" name="Acta Crystallogr. D">
        <title>Structure of C73G putidaredoxin from Pseudomonas putida.</title>
        <authorList>
            <person name="Smith N."/>
            <person name="Mayhew M."/>
            <person name="Holden M.J."/>
            <person name="Kelly H."/>
            <person name="Robinson H."/>
            <person name="Heroux A."/>
            <person name="Vilker V.L."/>
            <person name="Gallagher D.T."/>
        </authorList>
    </citation>
    <scope>X-RAY CRYSTALLOGRAPHY (1.9 ANGSTROMS) OF MUTANT GLY-74</scope>
</reference>
<reference key="8">
    <citation type="journal article" date="2005" name="J. Mol. Biol.">
        <title>Redox-dependent structural reorganization in putidaredoxin, a vertebrate-type [2Fe-2S] ferredoxin from Pseudomonas putida.</title>
        <authorList>
            <person name="Sevrioukova I.F."/>
        </authorList>
    </citation>
    <scope>X-RAY CRYSTALLOGRAPHY (1.45 ANGSTROMS) OF MUTANTS SER-74 AND SER-86</scope>
</reference>
<reference key="9">
    <citation type="journal article" date="1991" name="Biochemistry">
        <title>1H NMR identification of a beta-sheet structure and description of folding topology in putidaredoxin.</title>
        <authorList>
            <person name="Pochapsky T.C."/>
            <person name="Ye X.M."/>
        </authorList>
    </citation>
    <scope>STRUCTURE BY NMR</scope>
</reference>
<reference key="10">
    <citation type="journal article" date="1992" name="Biochemistry">
        <title>1H NMR sequential assignments and identification of secondary structural elements in oxidized putidaredoxin, an electron-transfer protein from Pseudomonas.</title>
        <authorList>
            <person name="Ye X.M."/>
            <person name="Pochapsky T.C."/>
            <person name="Pochapsky S.S."/>
        </authorList>
    </citation>
    <scope>STRUCTURE BY NMR</scope>
</reference>
<reference key="11">
    <citation type="journal article" date="1994" name="Biochemistry">
        <title>An NMR-derived model for the solution structure of oxidized putidaredoxin, a 2-Fe, 2-S ferredoxin from Pseudomonas.</title>
        <authorList>
            <person name="Pochapsky T.C."/>
            <person name="Ye X.M."/>
            <person name="Ratnaswamy G."/>
            <person name="Lyons T.A."/>
        </authorList>
    </citation>
    <scope>STRUCTURE BY NMR</scope>
</reference>
<reference key="12">
    <citation type="journal article" date="1994" name="Biochemistry">
        <title>Redox-dependent 1H NMR spectral features and tertiary structural constraints on the C-terminal region of putidaredoxin.</title>
        <authorList>
            <person name="Pochapsky T.C."/>
            <person name="Ratnaswamy G."/>
            <person name="Patera A."/>
        </authorList>
    </citation>
    <scope>STRUCTURE BY NMR</scope>
</reference>
<reference key="13">
    <citation type="journal article" date="1998" name="J. Biomol. NMR">
        <title>The solution structure of a gallium-substituted putidaredoxin mutant: GaPdx C85S.</title>
        <authorList>
            <person name="Pochapsky T.C."/>
            <person name="Kuti M."/>
            <person name="Kazanis S."/>
        </authorList>
    </citation>
    <scope>STRUCTURE BY NMR</scope>
</reference>
<reference key="14">
    <citation type="journal article" date="1999" name="Biochemistry">
        <title>A refined model for the solution structure of oxidized putidaredoxin.</title>
        <authorList>
            <person name="Pochapsky T.C."/>
            <person name="Jain N.U."/>
            <person name="Kuti M."/>
            <person name="Lyons T.A."/>
            <person name="Heymont J."/>
        </authorList>
    </citation>
    <scope>STRUCTURE BY NMR</scope>
</reference>
<accession>P00259</accession>
<keyword id="KW-0001">2Fe-2S</keyword>
<keyword id="KW-0002">3D-structure</keyword>
<keyword id="KW-0903">Direct protein sequencing</keyword>
<keyword id="KW-0249">Electron transport</keyword>
<keyword id="KW-0408">Iron</keyword>
<keyword id="KW-0411">Iron-sulfur</keyword>
<keyword id="KW-0479">Metal-binding</keyword>
<keyword id="KW-0813">Transport</keyword>
<sequence>MSKVVYVSHDGTRRELDVADGVSLMQAAVSNGIYDIVGDCGGSASCATCHVYVNEAFTDKVPAANEREIGMLECVTAELKPNSRLCCQIIMTPELDGIVVDVPDRQW</sequence>